<feature type="chain" id="PRO_0000304750" description="Mediator of RNA polymerase II transcription subunit 18">
    <location>
        <begin position="1"/>
        <end position="227"/>
    </location>
</feature>
<dbReference type="EMBL" id="HE600940">
    <property type="protein sequence ID" value="CAP31590.1"/>
    <property type="molecule type" value="Genomic_DNA"/>
</dbReference>
<dbReference type="SMR" id="Q61D43"/>
<dbReference type="FunCoup" id="Q61D43">
    <property type="interactions" value="2011"/>
</dbReference>
<dbReference type="STRING" id="6238.Q61D43"/>
<dbReference type="KEGG" id="cbr:CBG_12642"/>
<dbReference type="CTD" id="8582139"/>
<dbReference type="WormBase" id="CBG12642">
    <property type="protein sequence ID" value="CBP42492"/>
    <property type="gene ID" value="WBGene00033560"/>
    <property type="gene designation" value="Cbr-mdt-18"/>
</dbReference>
<dbReference type="eggNOG" id="KOG3264">
    <property type="taxonomic scope" value="Eukaryota"/>
</dbReference>
<dbReference type="HOGENOM" id="CLU_084570_0_0_1"/>
<dbReference type="InParanoid" id="Q61D43"/>
<dbReference type="OMA" id="FEYSVKG"/>
<dbReference type="Proteomes" id="UP000008549">
    <property type="component" value="Unassembled WGS sequence"/>
</dbReference>
<dbReference type="GO" id="GO:0070847">
    <property type="term" value="C:core mediator complex"/>
    <property type="evidence" value="ECO:0000318"/>
    <property type="project" value="GO_Central"/>
</dbReference>
<dbReference type="GO" id="GO:0016592">
    <property type="term" value="C:mediator complex"/>
    <property type="evidence" value="ECO:0000318"/>
    <property type="project" value="GO_Central"/>
</dbReference>
<dbReference type="GO" id="GO:0003712">
    <property type="term" value="F:transcription coregulator activity"/>
    <property type="evidence" value="ECO:0000318"/>
    <property type="project" value="GO_Central"/>
</dbReference>
<dbReference type="GO" id="GO:0060261">
    <property type="term" value="P:positive regulation of transcription initiation by RNA polymerase II"/>
    <property type="evidence" value="ECO:0000318"/>
    <property type="project" value="GO_Central"/>
</dbReference>
<dbReference type="FunFam" id="2.40.320.10:FF:000013">
    <property type="entry name" value="Mediator of RNA polymerase II transcription subunit 18"/>
    <property type="match status" value="1"/>
</dbReference>
<dbReference type="Gene3D" id="2.40.320.10">
    <property type="entry name" value="Hypothetical Protein Pfu-838710-001"/>
    <property type="match status" value="1"/>
</dbReference>
<dbReference type="InterPro" id="IPR019095">
    <property type="entry name" value="Mediator_Med18"/>
</dbReference>
<dbReference type="PANTHER" id="PTHR13321:SF2">
    <property type="entry name" value="MEDIATOR OF RNA POLYMERASE II TRANSCRIPTION SUBUNIT 18"/>
    <property type="match status" value="1"/>
</dbReference>
<dbReference type="PANTHER" id="PTHR13321">
    <property type="entry name" value="MEDIATOR OF RNA POLYMERASE II TRANSCRIPTION, SUBUNIT 18"/>
    <property type="match status" value="1"/>
</dbReference>
<dbReference type="Pfam" id="PF09637">
    <property type="entry name" value="Med18"/>
    <property type="match status" value="1"/>
</dbReference>
<keyword id="KW-0010">Activator</keyword>
<keyword id="KW-0539">Nucleus</keyword>
<keyword id="KW-1185">Reference proteome</keyword>
<keyword id="KW-0804">Transcription</keyword>
<keyword id="KW-0805">Transcription regulation</keyword>
<comment type="function">
    <text evidence="1">Component of the Mediator complex, a coactivator involved in the regulated transcription of nearly all RNA polymerase II-dependent genes. Mediator functions as a bridge to convey information from gene-specific regulatory proteins to the basal RNA polymerase II transcription machinery. Mediator is recruited to promoters by direct interactions with regulatory proteins and serves as a scaffold for the assembly of a functional preinitiation complex with RNA polymerase II and the general transcription factors (By similarity).</text>
</comment>
<comment type="subunit">
    <text evidence="1">Component of the Mediator complex.</text>
</comment>
<comment type="subcellular location">
    <subcellularLocation>
        <location evidence="2">Nucleus</location>
    </subcellularLocation>
</comment>
<comment type="similarity">
    <text evidence="2">Belongs to the Mediator complex subunit 18 family.</text>
</comment>
<name>MED18_CAEBR</name>
<evidence type="ECO:0000250" key="1"/>
<evidence type="ECO:0000305" key="2"/>
<reference key="1">
    <citation type="journal article" date="2003" name="PLoS Biol.">
        <title>The genome sequence of Caenorhabditis briggsae: a platform for comparative genomics.</title>
        <authorList>
            <person name="Stein L.D."/>
            <person name="Bao Z."/>
            <person name="Blasiar D."/>
            <person name="Blumenthal T."/>
            <person name="Brent M.R."/>
            <person name="Chen N."/>
            <person name="Chinwalla A."/>
            <person name="Clarke L."/>
            <person name="Clee C."/>
            <person name="Coghlan A."/>
            <person name="Coulson A."/>
            <person name="D'Eustachio P."/>
            <person name="Fitch D.H.A."/>
            <person name="Fulton L.A."/>
            <person name="Fulton R.E."/>
            <person name="Griffiths-Jones S."/>
            <person name="Harris T.W."/>
            <person name="Hillier L.W."/>
            <person name="Kamath R."/>
            <person name="Kuwabara P.E."/>
            <person name="Mardis E.R."/>
            <person name="Marra M.A."/>
            <person name="Miner T.L."/>
            <person name="Minx P."/>
            <person name="Mullikin J.C."/>
            <person name="Plumb R.W."/>
            <person name="Rogers J."/>
            <person name="Schein J.E."/>
            <person name="Sohrmann M."/>
            <person name="Spieth J."/>
            <person name="Stajich J.E."/>
            <person name="Wei C."/>
            <person name="Willey D."/>
            <person name="Wilson R.K."/>
            <person name="Durbin R.M."/>
            <person name="Waterston R.H."/>
        </authorList>
    </citation>
    <scope>NUCLEOTIDE SEQUENCE [LARGE SCALE GENOMIC DNA]</scope>
    <source>
        <strain>AF16</strain>
    </source>
</reference>
<sequence>MDNVVDVDEEGNQQKLSANSTPYQTQECVLYGSIFVKNVPDLERRLAGLWIRAAKNSMSTKCRSALEPPVHQILRRRFRTEHQIQNYWQLKYIGVPEPDQKCPTIVRKEISSLVHSQDMMTYAKSLGLRMDYEYITQGKLWTKGNIKILHSTLTRTLRAGTYDSSSLKSMSDSALVEISISLPESAEYMPAAKSLRDFADQLMPLVNMEKIDYWKKMFSTPAAPARR</sequence>
<organism>
    <name type="scientific">Caenorhabditis briggsae</name>
    <dbReference type="NCBI Taxonomy" id="6238"/>
    <lineage>
        <taxon>Eukaryota</taxon>
        <taxon>Metazoa</taxon>
        <taxon>Ecdysozoa</taxon>
        <taxon>Nematoda</taxon>
        <taxon>Chromadorea</taxon>
        <taxon>Rhabditida</taxon>
        <taxon>Rhabditina</taxon>
        <taxon>Rhabditomorpha</taxon>
        <taxon>Rhabditoidea</taxon>
        <taxon>Rhabditidae</taxon>
        <taxon>Peloderinae</taxon>
        <taxon>Caenorhabditis</taxon>
    </lineage>
</organism>
<protein>
    <recommendedName>
        <fullName>Mediator of RNA polymerase II transcription subunit 18</fullName>
    </recommendedName>
    <alternativeName>
        <fullName>Mediator complex subunit 18</fullName>
    </alternativeName>
</protein>
<gene>
    <name type="primary">mdt-18</name>
    <name type="ORF">CBG12642</name>
</gene>
<proteinExistence type="inferred from homology"/>
<accession>Q61D43</accession>
<accession>A8XG84</accession>